<feature type="chain" id="PRO_0000123226" description="Small ribosomal subunit protein uS11">
    <location>
        <begin position="1"/>
        <end position="129"/>
    </location>
</feature>
<sequence>MARKQVSRKRRVKKNIENGVAHIRSTFNNTIVTITDEFGNALSWSSAGALGFKGSKKSTPFAAQMASETASKSAMEHGLKTVEVTVKGPGPGRESAIRALQSAGLEVTAIRDVTPVPHNGCRPPKRRRV</sequence>
<evidence type="ECO:0000255" key="1">
    <source>
        <dbReference type="HAMAP-Rule" id="MF_01310"/>
    </source>
</evidence>
<evidence type="ECO:0000305" key="2"/>
<name>RS11_STAHJ</name>
<keyword id="KW-0687">Ribonucleoprotein</keyword>
<keyword id="KW-0689">Ribosomal protein</keyword>
<keyword id="KW-0694">RNA-binding</keyword>
<keyword id="KW-0699">rRNA-binding</keyword>
<dbReference type="EMBL" id="AP006716">
    <property type="protein sequence ID" value="BAE04136.1"/>
    <property type="molecule type" value="Genomic_DNA"/>
</dbReference>
<dbReference type="RefSeq" id="WP_000101625.1">
    <property type="nucleotide sequence ID" value="NC_007168.1"/>
</dbReference>
<dbReference type="SMR" id="Q4L889"/>
<dbReference type="GeneID" id="98346537"/>
<dbReference type="KEGG" id="sha:SH0827"/>
<dbReference type="eggNOG" id="COG0100">
    <property type="taxonomic scope" value="Bacteria"/>
</dbReference>
<dbReference type="HOGENOM" id="CLU_072439_5_0_9"/>
<dbReference type="OrthoDB" id="9806415at2"/>
<dbReference type="Proteomes" id="UP000000543">
    <property type="component" value="Chromosome"/>
</dbReference>
<dbReference type="GO" id="GO:1990904">
    <property type="term" value="C:ribonucleoprotein complex"/>
    <property type="evidence" value="ECO:0007669"/>
    <property type="project" value="UniProtKB-KW"/>
</dbReference>
<dbReference type="GO" id="GO:0005840">
    <property type="term" value="C:ribosome"/>
    <property type="evidence" value="ECO:0007669"/>
    <property type="project" value="UniProtKB-KW"/>
</dbReference>
<dbReference type="GO" id="GO:0019843">
    <property type="term" value="F:rRNA binding"/>
    <property type="evidence" value="ECO:0007669"/>
    <property type="project" value="UniProtKB-UniRule"/>
</dbReference>
<dbReference type="GO" id="GO:0003735">
    <property type="term" value="F:structural constituent of ribosome"/>
    <property type="evidence" value="ECO:0007669"/>
    <property type="project" value="InterPro"/>
</dbReference>
<dbReference type="GO" id="GO:0006412">
    <property type="term" value="P:translation"/>
    <property type="evidence" value="ECO:0007669"/>
    <property type="project" value="UniProtKB-UniRule"/>
</dbReference>
<dbReference type="FunFam" id="3.30.420.80:FF:000001">
    <property type="entry name" value="30S ribosomal protein S11"/>
    <property type="match status" value="1"/>
</dbReference>
<dbReference type="Gene3D" id="3.30.420.80">
    <property type="entry name" value="Ribosomal protein S11"/>
    <property type="match status" value="1"/>
</dbReference>
<dbReference type="HAMAP" id="MF_01310">
    <property type="entry name" value="Ribosomal_uS11"/>
    <property type="match status" value="1"/>
</dbReference>
<dbReference type="InterPro" id="IPR001971">
    <property type="entry name" value="Ribosomal_uS11"/>
</dbReference>
<dbReference type="InterPro" id="IPR019981">
    <property type="entry name" value="Ribosomal_uS11_bac-type"/>
</dbReference>
<dbReference type="InterPro" id="IPR018102">
    <property type="entry name" value="Ribosomal_uS11_CS"/>
</dbReference>
<dbReference type="InterPro" id="IPR036967">
    <property type="entry name" value="Ribosomal_uS11_sf"/>
</dbReference>
<dbReference type="NCBIfam" id="NF003698">
    <property type="entry name" value="PRK05309.1"/>
    <property type="match status" value="1"/>
</dbReference>
<dbReference type="NCBIfam" id="TIGR03632">
    <property type="entry name" value="uS11_bact"/>
    <property type="match status" value="1"/>
</dbReference>
<dbReference type="PANTHER" id="PTHR11759">
    <property type="entry name" value="40S RIBOSOMAL PROTEIN S14/30S RIBOSOMAL PROTEIN S11"/>
    <property type="match status" value="1"/>
</dbReference>
<dbReference type="Pfam" id="PF00411">
    <property type="entry name" value="Ribosomal_S11"/>
    <property type="match status" value="1"/>
</dbReference>
<dbReference type="PIRSF" id="PIRSF002131">
    <property type="entry name" value="Ribosomal_S11"/>
    <property type="match status" value="1"/>
</dbReference>
<dbReference type="SUPFAM" id="SSF53137">
    <property type="entry name" value="Translational machinery components"/>
    <property type="match status" value="1"/>
</dbReference>
<dbReference type="PROSITE" id="PS00054">
    <property type="entry name" value="RIBOSOMAL_S11"/>
    <property type="match status" value="1"/>
</dbReference>
<accession>Q4L889</accession>
<proteinExistence type="inferred from homology"/>
<organism>
    <name type="scientific">Staphylococcus haemolyticus (strain JCSC1435)</name>
    <dbReference type="NCBI Taxonomy" id="279808"/>
    <lineage>
        <taxon>Bacteria</taxon>
        <taxon>Bacillati</taxon>
        <taxon>Bacillota</taxon>
        <taxon>Bacilli</taxon>
        <taxon>Bacillales</taxon>
        <taxon>Staphylococcaceae</taxon>
        <taxon>Staphylococcus</taxon>
    </lineage>
</organism>
<reference key="1">
    <citation type="journal article" date="2005" name="J. Bacteriol.">
        <title>Whole-genome sequencing of Staphylococcus haemolyticus uncovers the extreme plasticity of its genome and the evolution of human-colonizing staphylococcal species.</title>
        <authorList>
            <person name="Takeuchi F."/>
            <person name="Watanabe S."/>
            <person name="Baba T."/>
            <person name="Yuzawa H."/>
            <person name="Ito T."/>
            <person name="Morimoto Y."/>
            <person name="Kuroda M."/>
            <person name="Cui L."/>
            <person name="Takahashi M."/>
            <person name="Ankai A."/>
            <person name="Baba S."/>
            <person name="Fukui S."/>
            <person name="Lee J.C."/>
            <person name="Hiramatsu K."/>
        </authorList>
    </citation>
    <scope>NUCLEOTIDE SEQUENCE [LARGE SCALE GENOMIC DNA]</scope>
    <source>
        <strain>JCSC1435</strain>
    </source>
</reference>
<protein>
    <recommendedName>
        <fullName evidence="1">Small ribosomal subunit protein uS11</fullName>
    </recommendedName>
    <alternativeName>
        <fullName evidence="2">30S ribosomal protein S11</fullName>
    </alternativeName>
</protein>
<comment type="function">
    <text evidence="1">Located on the platform of the 30S subunit, it bridges several disparate RNA helices of the 16S rRNA. Forms part of the Shine-Dalgarno cleft in the 70S ribosome.</text>
</comment>
<comment type="subunit">
    <text evidence="1">Part of the 30S ribosomal subunit. Interacts with proteins S7 and S18. Binds to IF-3.</text>
</comment>
<comment type="similarity">
    <text evidence="1">Belongs to the universal ribosomal protein uS11 family.</text>
</comment>
<gene>
    <name evidence="1" type="primary">rpsK</name>
    <name type="ordered locus">SH0827</name>
</gene>